<reference key="1">
    <citation type="journal article" date="2006" name="Theor. Appl. Genet.">
        <title>Complete chloroplast genome sequences of Solanum bulbocastanum, Solanum lycopersicum and comparative analyses with other Solanaceae genomes.</title>
        <authorList>
            <person name="Daniell H."/>
            <person name="Lee S.-B."/>
            <person name="Grevich J."/>
            <person name="Saski C."/>
            <person name="Quesada-Vargas T."/>
            <person name="Guda C."/>
            <person name="Tomkins J."/>
            <person name="Jansen R.K."/>
        </authorList>
    </citation>
    <scope>NUCLEOTIDE SEQUENCE [LARGE SCALE GENOMIC DNA]</scope>
    <source>
        <strain>cv. PT29</strain>
    </source>
</reference>
<organism>
    <name type="scientific">Solanum bulbocastanum</name>
    <name type="common">Wild potato</name>
    <dbReference type="NCBI Taxonomy" id="147425"/>
    <lineage>
        <taxon>Eukaryota</taxon>
        <taxon>Viridiplantae</taxon>
        <taxon>Streptophyta</taxon>
        <taxon>Embryophyta</taxon>
        <taxon>Tracheophyta</taxon>
        <taxon>Spermatophyta</taxon>
        <taxon>Magnoliopsida</taxon>
        <taxon>eudicotyledons</taxon>
        <taxon>Gunneridae</taxon>
        <taxon>Pentapetalae</taxon>
        <taxon>asterids</taxon>
        <taxon>lamiids</taxon>
        <taxon>Solanales</taxon>
        <taxon>Solanaceae</taxon>
        <taxon>Solanoideae</taxon>
        <taxon>Solaneae</taxon>
        <taxon>Solanum</taxon>
    </lineage>
</organism>
<name>RR15_SOLBU</name>
<gene>
    <name type="primary">rps15</name>
</gene>
<protein>
    <recommendedName>
        <fullName evidence="2">Small ribosomal subunit protein uS15c</fullName>
    </recommendedName>
    <alternativeName>
        <fullName>30S ribosomal protein S15, chloroplastic</fullName>
    </alternativeName>
</protein>
<accession>Q2MID0</accession>
<proteinExistence type="inferred from homology"/>
<sequence length="87" mass="10442">MVKNSVISVIFQEEKKGSVEFQVFNFTNKIRRLTSHLELHKKDYLSQRGLKKILGKRQRLLAYLAKKNRVRYKELINQLDIRETKTH</sequence>
<dbReference type="EMBL" id="DQ347958">
    <property type="protein sequence ID" value="ABC56271.1"/>
    <property type="molecule type" value="Genomic_DNA"/>
</dbReference>
<dbReference type="RefSeq" id="YP_538907.1">
    <property type="nucleotide sequence ID" value="NC_007943.1"/>
</dbReference>
<dbReference type="SMR" id="Q2MID0"/>
<dbReference type="GeneID" id="3989471"/>
<dbReference type="GO" id="GO:0009507">
    <property type="term" value="C:chloroplast"/>
    <property type="evidence" value="ECO:0007669"/>
    <property type="project" value="UniProtKB-SubCell"/>
</dbReference>
<dbReference type="GO" id="GO:1990904">
    <property type="term" value="C:ribonucleoprotein complex"/>
    <property type="evidence" value="ECO:0007669"/>
    <property type="project" value="UniProtKB-KW"/>
</dbReference>
<dbReference type="GO" id="GO:0005840">
    <property type="term" value="C:ribosome"/>
    <property type="evidence" value="ECO:0007669"/>
    <property type="project" value="UniProtKB-KW"/>
</dbReference>
<dbReference type="GO" id="GO:0003735">
    <property type="term" value="F:structural constituent of ribosome"/>
    <property type="evidence" value="ECO:0007669"/>
    <property type="project" value="InterPro"/>
</dbReference>
<dbReference type="GO" id="GO:0006412">
    <property type="term" value="P:translation"/>
    <property type="evidence" value="ECO:0007669"/>
    <property type="project" value="UniProtKB-UniRule"/>
</dbReference>
<dbReference type="CDD" id="cd00353">
    <property type="entry name" value="Ribosomal_S15p_S13e"/>
    <property type="match status" value="1"/>
</dbReference>
<dbReference type="Gene3D" id="1.10.287.10">
    <property type="entry name" value="S15/NS1, RNA-binding"/>
    <property type="match status" value="1"/>
</dbReference>
<dbReference type="HAMAP" id="MF_01343_B">
    <property type="entry name" value="Ribosomal_uS15_B"/>
    <property type="match status" value="1"/>
</dbReference>
<dbReference type="InterPro" id="IPR000589">
    <property type="entry name" value="Ribosomal_uS15"/>
</dbReference>
<dbReference type="InterPro" id="IPR005290">
    <property type="entry name" value="Ribosomal_uS15_bac-type"/>
</dbReference>
<dbReference type="InterPro" id="IPR009068">
    <property type="entry name" value="uS15_NS1_RNA-bd_sf"/>
</dbReference>
<dbReference type="NCBIfam" id="TIGR00952">
    <property type="entry name" value="S15_bact"/>
    <property type="match status" value="1"/>
</dbReference>
<dbReference type="PANTHER" id="PTHR23321">
    <property type="entry name" value="RIBOSOMAL PROTEIN S15, BACTERIAL AND ORGANELLAR"/>
    <property type="match status" value="1"/>
</dbReference>
<dbReference type="PANTHER" id="PTHR23321:SF26">
    <property type="entry name" value="SMALL RIBOSOMAL SUBUNIT PROTEIN US15M"/>
    <property type="match status" value="1"/>
</dbReference>
<dbReference type="Pfam" id="PF00312">
    <property type="entry name" value="Ribosomal_S15"/>
    <property type="match status" value="1"/>
</dbReference>
<dbReference type="SMART" id="SM01387">
    <property type="entry name" value="Ribosomal_S15"/>
    <property type="match status" value="1"/>
</dbReference>
<dbReference type="SUPFAM" id="SSF47060">
    <property type="entry name" value="S15/NS1 RNA-binding domain"/>
    <property type="match status" value="1"/>
</dbReference>
<dbReference type="PROSITE" id="PS00362">
    <property type="entry name" value="RIBOSOMAL_S15"/>
    <property type="match status" value="1"/>
</dbReference>
<evidence type="ECO:0000250" key="1"/>
<evidence type="ECO:0000305" key="2"/>
<geneLocation type="chloroplast"/>
<keyword id="KW-0150">Chloroplast</keyword>
<keyword id="KW-0934">Plastid</keyword>
<keyword id="KW-0687">Ribonucleoprotein</keyword>
<keyword id="KW-0689">Ribosomal protein</keyword>
<comment type="subunit">
    <text evidence="1">Part of the 30S ribosomal subunit.</text>
</comment>
<comment type="subcellular location">
    <subcellularLocation>
        <location>Plastid</location>
        <location>Chloroplast</location>
    </subcellularLocation>
</comment>
<comment type="similarity">
    <text evidence="2">Belongs to the universal ribosomal protein uS15 family.</text>
</comment>
<feature type="chain" id="PRO_0000255556" description="Small ribosomal subunit protein uS15c">
    <location>
        <begin position="1"/>
        <end position="87"/>
    </location>
</feature>